<evidence type="ECO:0000255" key="1">
    <source>
        <dbReference type="HAMAP-Rule" id="MF_01217"/>
    </source>
</evidence>
<evidence type="ECO:0000255" key="2">
    <source>
        <dbReference type="PROSITE-ProRule" id="PRU00258"/>
    </source>
</evidence>
<name>ACP_COPPD</name>
<reference key="1">
    <citation type="submission" date="2008-08" db="EMBL/GenBank/DDBJ databases">
        <title>The complete genome sequence of Coprothermobacter proteolyticus strain ATCC 5245 / DSM 5265 / BT.</title>
        <authorList>
            <person name="Dodson R.J."/>
            <person name="Durkin A.S."/>
            <person name="Wu M."/>
            <person name="Eisen J."/>
            <person name="Sutton G."/>
        </authorList>
    </citation>
    <scope>NUCLEOTIDE SEQUENCE [LARGE SCALE GENOMIC DNA]</scope>
    <source>
        <strain>ATCC 35245 / DSM 5265 / OCM 4 / BT</strain>
    </source>
</reference>
<dbReference type="EMBL" id="CP001145">
    <property type="protein sequence ID" value="ACI18221.1"/>
    <property type="molecule type" value="Genomic_DNA"/>
</dbReference>
<dbReference type="RefSeq" id="WP_012544871.1">
    <property type="nucleotide sequence ID" value="NC_011295.1"/>
</dbReference>
<dbReference type="SMR" id="B5Y7W4"/>
<dbReference type="STRING" id="309798.COPRO5265_0502"/>
<dbReference type="KEGG" id="cpo:COPRO5265_0502"/>
<dbReference type="eggNOG" id="COG0236">
    <property type="taxonomic scope" value="Bacteria"/>
</dbReference>
<dbReference type="HOGENOM" id="CLU_108696_5_4_9"/>
<dbReference type="OrthoDB" id="9804551at2"/>
<dbReference type="UniPathway" id="UPA00094"/>
<dbReference type="Proteomes" id="UP000001732">
    <property type="component" value="Chromosome"/>
</dbReference>
<dbReference type="GO" id="GO:0005829">
    <property type="term" value="C:cytosol"/>
    <property type="evidence" value="ECO:0007669"/>
    <property type="project" value="TreeGrafter"/>
</dbReference>
<dbReference type="GO" id="GO:0016020">
    <property type="term" value="C:membrane"/>
    <property type="evidence" value="ECO:0007669"/>
    <property type="project" value="GOC"/>
</dbReference>
<dbReference type="GO" id="GO:0000035">
    <property type="term" value="F:acyl binding"/>
    <property type="evidence" value="ECO:0007669"/>
    <property type="project" value="TreeGrafter"/>
</dbReference>
<dbReference type="GO" id="GO:0000036">
    <property type="term" value="F:acyl carrier activity"/>
    <property type="evidence" value="ECO:0007669"/>
    <property type="project" value="UniProtKB-UniRule"/>
</dbReference>
<dbReference type="GO" id="GO:0009245">
    <property type="term" value="P:lipid A biosynthetic process"/>
    <property type="evidence" value="ECO:0007669"/>
    <property type="project" value="TreeGrafter"/>
</dbReference>
<dbReference type="Gene3D" id="1.10.1200.10">
    <property type="entry name" value="ACP-like"/>
    <property type="match status" value="1"/>
</dbReference>
<dbReference type="HAMAP" id="MF_01217">
    <property type="entry name" value="Acyl_carrier"/>
    <property type="match status" value="1"/>
</dbReference>
<dbReference type="InterPro" id="IPR003231">
    <property type="entry name" value="ACP"/>
</dbReference>
<dbReference type="InterPro" id="IPR036736">
    <property type="entry name" value="ACP-like_sf"/>
</dbReference>
<dbReference type="InterPro" id="IPR009081">
    <property type="entry name" value="PP-bd_ACP"/>
</dbReference>
<dbReference type="NCBIfam" id="NF002148">
    <property type="entry name" value="PRK00982.1-2"/>
    <property type="match status" value="1"/>
</dbReference>
<dbReference type="PANTHER" id="PTHR20863">
    <property type="entry name" value="ACYL CARRIER PROTEIN"/>
    <property type="match status" value="1"/>
</dbReference>
<dbReference type="PANTHER" id="PTHR20863:SF76">
    <property type="entry name" value="CARRIER DOMAIN-CONTAINING PROTEIN"/>
    <property type="match status" value="1"/>
</dbReference>
<dbReference type="Pfam" id="PF00550">
    <property type="entry name" value="PP-binding"/>
    <property type="match status" value="1"/>
</dbReference>
<dbReference type="SUPFAM" id="SSF47336">
    <property type="entry name" value="ACP-like"/>
    <property type="match status" value="1"/>
</dbReference>
<dbReference type="PROSITE" id="PS50075">
    <property type="entry name" value="CARRIER"/>
    <property type="match status" value="1"/>
</dbReference>
<proteinExistence type="inferred from homology"/>
<protein>
    <recommendedName>
        <fullName evidence="1">Acyl carrier protein</fullName>
        <shortName evidence="1">ACP</shortName>
    </recommendedName>
</protein>
<organism>
    <name type="scientific">Coprothermobacter proteolyticus (strain ATCC 35245 / DSM 5265 / OCM 4 / BT)</name>
    <dbReference type="NCBI Taxonomy" id="309798"/>
    <lineage>
        <taxon>Bacteria</taxon>
        <taxon>Pseudomonadati</taxon>
        <taxon>Coprothermobacterota</taxon>
        <taxon>Coprothermobacteria</taxon>
        <taxon>Coprothermobacterales</taxon>
        <taxon>Coprothermobacteraceae</taxon>
        <taxon>Coprothermobacter</taxon>
    </lineage>
</organism>
<keyword id="KW-0963">Cytoplasm</keyword>
<keyword id="KW-0275">Fatty acid biosynthesis</keyword>
<keyword id="KW-0276">Fatty acid metabolism</keyword>
<keyword id="KW-0444">Lipid biosynthesis</keyword>
<keyword id="KW-0443">Lipid metabolism</keyword>
<keyword id="KW-0596">Phosphopantetheine</keyword>
<keyword id="KW-0597">Phosphoprotein</keyword>
<keyword id="KW-1185">Reference proteome</keyword>
<accession>B5Y7W4</accession>
<sequence length="82" mass="9525">MEREKIFQELKNILKDTVTVEEEEITMESDLVNDLNLDSLDLVDLALSVEQVFGFEFSDEQLQQIKTVKDVVDIIESNLYTK</sequence>
<gene>
    <name evidence="1" type="primary">acpP</name>
    <name type="ordered locus">COPRO5265_0502</name>
</gene>
<comment type="function">
    <text evidence="1">Carrier of the growing fatty acid chain in fatty acid biosynthesis.</text>
</comment>
<comment type="pathway">
    <text evidence="1">Lipid metabolism; fatty acid biosynthesis.</text>
</comment>
<comment type="subcellular location">
    <subcellularLocation>
        <location evidence="1">Cytoplasm</location>
    </subcellularLocation>
</comment>
<comment type="PTM">
    <text evidence="1">4'-phosphopantetheine is transferred from CoA to a specific serine of apo-ACP by AcpS. This modification is essential for activity because fatty acids are bound in thioester linkage to the sulfhydryl of the prosthetic group.</text>
</comment>
<comment type="similarity">
    <text evidence="1">Belongs to the acyl carrier protein (ACP) family.</text>
</comment>
<feature type="chain" id="PRO_1000139014" description="Acyl carrier protein">
    <location>
        <begin position="1"/>
        <end position="82"/>
    </location>
</feature>
<feature type="domain" description="Carrier" evidence="2">
    <location>
        <begin position="4"/>
        <end position="79"/>
    </location>
</feature>
<feature type="modified residue" description="O-(pantetheine 4'-phosphoryl)serine" evidence="2">
    <location>
        <position position="39"/>
    </location>
</feature>